<keyword id="KW-0067">ATP-binding</keyword>
<keyword id="KW-0963">Cytoplasm</keyword>
<keyword id="KW-0315">Glutamine amidotransferase</keyword>
<keyword id="KW-0436">Ligase</keyword>
<keyword id="KW-0547">Nucleotide-binding</keyword>
<keyword id="KW-0665">Pyrimidine biosynthesis</keyword>
<keyword id="KW-1185">Reference proteome</keyword>
<gene>
    <name type="primary">URA8</name>
    <name type="ordered locus">YJR103W</name>
    <name type="ORF">J1962</name>
</gene>
<dbReference type="EC" id="6.3.4.2"/>
<dbReference type="EMBL" id="X68196">
    <property type="protein sequence ID" value="CAA48277.1"/>
    <property type="molecule type" value="Genomic_DNA"/>
</dbReference>
<dbReference type="EMBL" id="Z49603">
    <property type="protein sequence ID" value="CAA89633.1"/>
    <property type="status" value="ALT_FRAME"/>
    <property type="molecule type" value="Genomic_DNA"/>
</dbReference>
<dbReference type="EMBL" id="BK006943">
    <property type="protein sequence ID" value="DAA08888.2"/>
    <property type="molecule type" value="Genomic_DNA"/>
</dbReference>
<dbReference type="PIR" id="S57124">
    <property type="entry name" value="S57124"/>
</dbReference>
<dbReference type="RefSeq" id="NP_012637.4">
    <property type="nucleotide sequence ID" value="NM_001181761.4"/>
</dbReference>
<dbReference type="SMR" id="P38627"/>
<dbReference type="BioGRID" id="33859">
    <property type="interactions" value="85"/>
</dbReference>
<dbReference type="DIP" id="DIP-3941N"/>
<dbReference type="FunCoup" id="P38627">
    <property type="interactions" value="645"/>
</dbReference>
<dbReference type="IntAct" id="P38627">
    <property type="interactions" value="1"/>
</dbReference>
<dbReference type="MINT" id="P38627"/>
<dbReference type="STRING" id="4932.YJR103W"/>
<dbReference type="MEROPS" id="C26.A36"/>
<dbReference type="iPTMnet" id="P38627"/>
<dbReference type="PaxDb" id="4932-YJR103W"/>
<dbReference type="PeptideAtlas" id="P38627"/>
<dbReference type="EnsemblFungi" id="YJR103W_mRNA">
    <property type="protein sequence ID" value="YJR103W"/>
    <property type="gene ID" value="YJR103W"/>
</dbReference>
<dbReference type="GeneID" id="853567"/>
<dbReference type="KEGG" id="sce:YJR103W"/>
<dbReference type="AGR" id="SGD:S000003864"/>
<dbReference type="SGD" id="S000003864">
    <property type="gene designation" value="URA8"/>
</dbReference>
<dbReference type="VEuPathDB" id="FungiDB:YJR103W"/>
<dbReference type="eggNOG" id="KOG2387">
    <property type="taxonomic scope" value="Eukaryota"/>
</dbReference>
<dbReference type="GeneTree" id="ENSGT00910000144179"/>
<dbReference type="HOGENOM" id="CLU_011675_5_0_1"/>
<dbReference type="InParanoid" id="P38627"/>
<dbReference type="OMA" id="HAAMYCH"/>
<dbReference type="OrthoDB" id="1739076at2759"/>
<dbReference type="BioCyc" id="YEAST:YJR103W-MONOMER"/>
<dbReference type="BRENDA" id="6.3.4.2">
    <property type="organism ID" value="984"/>
</dbReference>
<dbReference type="Reactome" id="R-SCE-499943">
    <property type="pathway name" value="Interconversion of nucleotide di- and triphosphates"/>
</dbReference>
<dbReference type="UniPathway" id="UPA00159">
    <property type="reaction ID" value="UER00277"/>
</dbReference>
<dbReference type="BioGRID-ORCS" id="853567">
    <property type="hits" value="7 hits in 10 CRISPR screens"/>
</dbReference>
<dbReference type="PRO" id="PR:P38627"/>
<dbReference type="Proteomes" id="UP000002311">
    <property type="component" value="Chromosome X"/>
</dbReference>
<dbReference type="RNAct" id="P38627">
    <property type="molecule type" value="protein"/>
</dbReference>
<dbReference type="GO" id="GO:0097268">
    <property type="term" value="C:cytoophidium"/>
    <property type="evidence" value="ECO:0000314"/>
    <property type="project" value="SGD"/>
</dbReference>
<dbReference type="GO" id="GO:0005737">
    <property type="term" value="C:cytoplasm"/>
    <property type="evidence" value="ECO:0000318"/>
    <property type="project" value="GO_Central"/>
</dbReference>
<dbReference type="GO" id="GO:0000324">
    <property type="term" value="C:fungal-type vacuole"/>
    <property type="evidence" value="ECO:0007005"/>
    <property type="project" value="SGD"/>
</dbReference>
<dbReference type="GO" id="GO:0005524">
    <property type="term" value="F:ATP binding"/>
    <property type="evidence" value="ECO:0007669"/>
    <property type="project" value="UniProtKB-KW"/>
</dbReference>
<dbReference type="GO" id="GO:0003883">
    <property type="term" value="F:CTP synthase activity"/>
    <property type="evidence" value="ECO:0000314"/>
    <property type="project" value="SGD"/>
</dbReference>
<dbReference type="GO" id="GO:0042802">
    <property type="term" value="F:identical protein binding"/>
    <property type="evidence" value="ECO:0000318"/>
    <property type="project" value="GO_Central"/>
</dbReference>
<dbReference type="GO" id="GO:0044210">
    <property type="term" value="P:'de novo' CTP biosynthetic process"/>
    <property type="evidence" value="ECO:0007669"/>
    <property type="project" value="UniProtKB-UniPathway"/>
</dbReference>
<dbReference type="GO" id="GO:0006241">
    <property type="term" value="P:CTP biosynthetic process"/>
    <property type="evidence" value="ECO:0000314"/>
    <property type="project" value="SGD"/>
</dbReference>
<dbReference type="GO" id="GO:0019856">
    <property type="term" value="P:pyrimidine nucleobase biosynthetic process"/>
    <property type="evidence" value="ECO:0000318"/>
    <property type="project" value="GO_Central"/>
</dbReference>
<dbReference type="CDD" id="cd03113">
    <property type="entry name" value="CTPS_N"/>
    <property type="match status" value="1"/>
</dbReference>
<dbReference type="CDD" id="cd01746">
    <property type="entry name" value="GATase1_CTP_Synthase"/>
    <property type="match status" value="1"/>
</dbReference>
<dbReference type="FunFam" id="3.40.50.300:FF:000207">
    <property type="entry name" value="CTP synthase"/>
    <property type="match status" value="1"/>
</dbReference>
<dbReference type="FunFam" id="3.40.50.880:FF:000005">
    <property type="entry name" value="CTP synthase"/>
    <property type="match status" value="1"/>
</dbReference>
<dbReference type="Gene3D" id="3.40.50.880">
    <property type="match status" value="1"/>
</dbReference>
<dbReference type="Gene3D" id="3.40.50.300">
    <property type="entry name" value="P-loop containing nucleotide triphosphate hydrolases"/>
    <property type="match status" value="1"/>
</dbReference>
<dbReference type="InterPro" id="IPR029062">
    <property type="entry name" value="Class_I_gatase-like"/>
</dbReference>
<dbReference type="InterPro" id="IPR004468">
    <property type="entry name" value="CTP_synthase"/>
</dbReference>
<dbReference type="InterPro" id="IPR017456">
    <property type="entry name" value="CTP_synthase_N"/>
</dbReference>
<dbReference type="InterPro" id="IPR017926">
    <property type="entry name" value="GATASE"/>
</dbReference>
<dbReference type="InterPro" id="IPR033828">
    <property type="entry name" value="GATase1_CTP_Synthase"/>
</dbReference>
<dbReference type="InterPro" id="IPR027417">
    <property type="entry name" value="P-loop_NTPase"/>
</dbReference>
<dbReference type="NCBIfam" id="NF003792">
    <property type="entry name" value="PRK05380.1"/>
    <property type="match status" value="1"/>
</dbReference>
<dbReference type="NCBIfam" id="TIGR00337">
    <property type="entry name" value="PyrG"/>
    <property type="match status" value="1"/>
</dbReference>
<dbReference type="PANTHER" id="PTHR11550">
    <property type="entry name" value="CTP SYNTHASE"/>
    <property type="match status" value="1"/>
</dbReference>
<dbReference type="PANTHER" id="PTHR11550:SF0">
    <property type="entry name" value="CTP SYNTHASE-RELATED"/>
    <property type="match status" value="1"/>
</dbReference>
<dbReference type="Pfam" id="PF06418">
    <property type="entry name" value="CTP_synth_N"/>
    <property type="match status" value="1"/>
</dbReference>
<dbReference type="Pfam" id="PF00117">
    <property type="entry name" value="GATase"/>
    <property type="match status" value="1"/>
</dbReference>
<dbReference type="SUPFAM" id="SSF52317">
    <property type="entry name" value="Class I glutamine amidotransferase-like"/>
    <property type="match status" value="1"/>
</dbReference>
<dbReference type="SUPFAM" id="SSF52540">
    <property type="entry name" value="P-loop containing nucleoside triphosphate hydrolases"/>
    <property type="match status" value="1"/>
</dbReference>
<dbReference type="PROSITE" id="PS51273">
    <property type="entry name" value="GATASE_TYPE_1"/>
    <property type="match status" value="1"/>
</dbReference>
<organism>
    <name type="scientific">Saccharomyces cerevisiae (strain ATCC 204508 / S288c)</name>
    <name type="common">Baker's yeast</name>
    <dbReference type="NCBI Taxonomy" id="559292"/>
    <lineage>
        <taxon>Eukaryota</taxon>
        <taxon>Fungi</taxon>
        <taxon>Dikarya</taxon>
        <taxon>Ascomycota</taxon>
        <taxon>Saccharomycotina</taxon>
        <taxon>Saccharomycetes</taxon>
        <taxon>Saccharomycetales</taxon>
        <taxon>Saccharomycetaceae</taxon>
        <taxon>Saccharomyces</taxon>
    </lineage>
</organism>
<sequence length="578" mass="64511">MKYVVVSGGVISGIGKGVLASSTGMLLKTLGLKVTSIKIDPYMNIDAGTMSPLEHGECFVLDDGGETDLDLGNYERYLGITLSRDHNITTGKIYSHVISRERRGDYLGKTVQIVPHLTNAIQDWIQRVSKIPVDDTGLEPDVCIIELGGTVGDIESAPFVEALRQFQFEVGRENFALIHVSLVPVIHGEQKTKPTQAAIKDLRSLGLIPDMIACRCSEELNRSTIDKIAMFCHVGPEQVVNVHDVNSTYHVPLLLLKQHMIDYLHSRLKLGEVPLTLEDKERGSQLLTNWENMTKNLDDSDDVVKIALVGKYTNLKDSYLSVTKSLEHASMKCRRQLEILWVEASNLEPETQEVDKNKFHDSWNKLSSADGILVPGGFGTRGIEGMILAAKWARESGVPFLGVCLGLQVAAIEFARNVIGRPNSSSTEFLDETLLAPEDQVVIYMPEIDKEHMGGTMRLGLRPTIFQPNSEWSNIRKLYGEVNEVHERHRHRYEINPKIVNDMESRGFIFVGKDETGQRCEIFELKGHPYYVGTQYHPEYTSKVLEPSRPFWGLVAAASGTLGEVIKDINLSEGNENE</sequence>
<feature type="chain" id="PRO_0000138284" description="CTP synthase 2">
    <location>
        <begin position="1"/>
        <end position="578"/>
    </location>
</feature>
<feature type="domain" description="Glutamine amidotransferase type-1" evidence="1">
    <location>
        <begin position="305"/>
        <end position="564"/>
    </location>
</feature>
<feature type="active site" description="For GATase activity" evidence="1">
    <location>
        <position position="404"/>
    </location>
</feature>
<feature type="active site" description="For GATase activity" evidence="1">
    <location>
        <position position="537"/>
    </location>
</feature>
<feature type="active site" description="For GATase activity" evidence="1">
    <location>
        <position position="539"/>
    </location>
</feature>
<feature type="mutagenesis site" description="Increases the specific activity 2-fold and decreases sensitivity to CTP product inhibition 5-fold." evidence="5">
    <original>E</original>
    <variation>K</variation>
    <location>
        <position position="161"/>
    </location>
</feature>
<feature type="mutagenesis site" description="No effect on activity and product inhibition by CTP." evidence="5">
    <original>H</original>
    <variation>K</variation>
    <location>
        <position position="233"/>
    </location>
</feature>
<feature type="sequence conflict" description="In Ref. 1; CAA48277." evidence="6" ref="1">
    <original>HV</original>
    <variation>QL</variation>
    <location>
        <begin position="96"/>
        <end position="97"/>
    </location>
</feature>
<feature type="sequence conflict" description="In Ref. 1; CAA48277." evidence="6" ref="1">
    <original>S</original>
    <variation>L</variation>
    <location>
        <position position="204"/>
    </location>
</feature>
<feature type="sequence conflict" description="In Ref. 1; CAA48277." evidence="6" ref="1">
    <original>QVVIYMP</original>
    <variation>PSSHIHA</variation>
    <location>
        <begin position="440"/>
        <end position="446"/>
    </location>
</feature>
<feature type="sequence conflict" description="In Ref. 1; CAA48277." evidence="6" ref="1">
    <original>AASGTLG</original>
    <variation>QLRHTC</variation>
    <location>
        <begin position="557"/>
        <end position="563"/>
    </location>
</feature>
<evidence type="ECO:0000255" key="1">
    <source>
        <dbReference type="PROSITE-ProRule" id="PRU00605"/>
    </source>
</evidence>
<evidence type="ECO:0000269" key="2">
    <source>
    </source>
</evidence>
<evidence type="ECO:0000269" key="3">
    <source>
    </source>
</evidence>
<evidence type="ECO:0000269" key="4">
    <source>
    </source>
</evidence>
<evidence type="ECO:0000269" key="5">
    <source>
    </source>
</evidence>
<evidence type="ECO:0000305" key="6"/>
<name>URA8_YEAST</name>
<accession>P38627</accession>
<accession>D6VWS2</accession>
<proteinExistence type="evidence at protein level"/>
<comment type="function">
    <text>Catalyzes the ATP-dependent amination of UTP to CTP with either L-glutamine or ammonia as the source of nitrogen. Plays an important role in the regulation of phospholipid synthesis.</text>
</comment>
<comment type="catalytic activity">
    <reaction>
        <text>UTP + L-glutamine + ATP + H2O = CTP + L-glutamate + ADP + phosphate + 2 H(+)</text>
        <dbReference type="Rhea" id="RHEA:26426"/>
        <dbReference type="ChEBI" id="CHEBI:15377"/>
        <dbReference type="ChEBI" id="CHEBI:15378"/>
        <dbReference type="ChEBI" id="CHEBI:29985"/>
        <dbReference type="ChEBI" id="CHEBI:30616"/>
        <dbReference type="ChEBI" id="CHEBI:37563"/>
        <dbReference type="ChEBI" id="CHEBI:43474"/>
        <dbReference type="ChEBI" id="CHEBI:46398"/>
        <dbReference type="ChEBI" id="CHEBI:58359"/>
        <dbReference type="ChEBI" id="CHEBI:456216"/>
        <dbReference type="EC" id="6.3.4.2"/>
    </reaction>
</comment>
<comment type="cofactor">
    <cofactor>
        <name>Mg(2+)</name>
        <dbReference type="ChEBI" id="CHEBI:18420"/>
    </cofactor>
</comment>
<comment type="activity regulation">
    <text evidence="4 5">Activated by GTP. Subject to allosteric product inhibition by CTP. Inhibited by p-chloromercuriphenylsulfonic acid, N-ethylmaleimide and cyclopentenylcytosine (CPEC).</text>
</comment>
<comment type="biophysicochemical properties">
    <kinetics>
        <KM evidence="4">74 uM for UTP</KM>
        <KM evidence="4">22 uM for ATP</KM>
        <KM evidence="4">0.14 mM for L-glutamine</KM>
    </kinetics>
    <phDependence>
        <text evidence="4">Optimum pH is 7.5.</text>
    </phDependence>
</comment>
<comment type="pathway">
    <text>Pyrimidine metabolism; CTP biosynthesis via de novo pathway; CTP from UDP: step 2/2.</text>
</comment>
<comment type="subunit">
    <text evidence="4">Homodimer. Oligomerizes to a tetramer in the presence of its substrates UTP and ATP.</text>
</comment>
<comment type="subcellular location">
    <subcellularLocation>
        <location evidence="2">Cytoplasm</location>
    </subcellularLocation>
</comment>
<comment type="miscellaneous">
    <text evidence="3">Present with 5370 molecules/cell in log phase SD medium.</text>
</comment>
<comment type="similarity">
    <text evidence="6">Belongs to the CTP synthase family.</text>
</comment>
<comment type="sequence caution" evidence="6">
    <conflict type="frameshift">
        <sequence resource="EMBL-CDS" id="CAA89633"/>
    </conflict>
</comment>
<protein>
    <recommendedName>
        <fullName>CTP synthase 2</fullName>
        <ecNumber>6.3.4.2</ecNumber>
    </recommendedName>
    <alternativeName>
        <fullName>CTP synthetase 2</fullName>
    </alternativeName>
    <alternativeName>
        <fullName>UTP--ammonia ligase 2</fullName>
    </alternativeName>
</protein>
<reference key="1">
    <citation type="journal article" date="1994" name="Mol. Gen. Genet.">
        <title>Use of synthetic lethal mutants to clone and characterize a novel CTP synthetase gene in Saccharomyces cerevisiae.</title>
        <authorList>
            <person name="Ozier-Kalogeropoulos O."/>
            <person name="Adeline M.-T."/>
            <person name="Yang W.-L."/>
            <person name="Carman G.M."/>
            <person name="Lacroute F."/>
        </authorList>
    </citation>
    <scope>NUCLEOTIDE SEQUENCE [GENOMIC DNA]</scope>
    <source>
        <strain>ATCC 28383 / FL100 / VTT C-80102</strain>
    </source>
</reference>
<reference key="2">
    <citation type="journal article" date="1996" name="EMBO J.">
        <title>Complete nucleotide sequence of Saccharomyces cerevisiae chromosome X.</title>
        <authorList>
            <person name="Galibert F."/>
            <person name="Alexandraki D."/>
            <person name="Baur A."/>
            <person name="Boles E."/>
            <person name="Chalwatzis N."/>
            <person name="Chuat J.-C."/>
            <person name="Coster F."/>
            <person name="Cziepluch C."/>
            <person name="de Haan M."/>
            <person name="Domdey H."/>
            <person name="Durand P."/>
            <person name="Entian K.-D."/>
            <person name="Gatius M."/>
            <person name="Goffeau A."/>
            <person name="Grivell L.A."/>
            <person name="Hennemann A."/>
            <person name="Herbert C.J."/>
            <person name="Heumann K."/>
            <person name="Hilger F."/>
            <person name="Hollenberg C.P."/>
            <person name="Huang M.-E."/>
            <person name="Jacq C."/>
            <person name="Jauniaux J.-C."/>
            <person name="Katsoulou C."/>
            <person name="Kirchrath L."/>
            <person name="Kleine K."/>
            <person name="Kordes E."/>
            <person name="Koetter P."/>
            <person name="Liebl S."/>
            <person name="Louis E.J."/>
            <person name="Manus V."/>
            <person name="Mewes H.-W."/>
            <person name="Miosga T."/>
            <person name="Obermaier B."/>
            <person name="Perea J."/>
            <person name="Pohl T.M."/>
            <person name="Portetelle D."/>
            <person name="Pujol A."/>
            <person name="Purnelle B."/>
            <person name="Ramezani Rad M."/>
            <person name="Rasmussen S.W."/>
            <person name="Rose M."/>
            <person name="Rossau R."/>
            <person name="Schaaff-Gerstenschlaeger I."/>
            <person name="Smits P.H.M."/>
            <person name="Scarcez T."/>
            <person name="Soriano N."/>
            <person name="To Van D."/>
            <person name="Tzermia M."/>
            <person name="Van Broekhoven A."/>
            <person name="Vandenbol M."/>
            <person name="Wedler H."/>
            <person name="von Wettstein D."/>
            <person name="Wambutt R."/>
            <person name="Zagulski M."/>
            <person name="Zollner A."/>
            <person name="Karpfinger-Hartl L."/>
        </authorList>
    </citation>
    <scope>NUCLEOTIDE SEQUENCE [LARGE SCALE GENOMIC DNA]</scope>
    <source>
        <strain>ATCC 204508 / S288c</strain>
    </source>
</reference>
<reference key="3">
    <citation type="journal article" date="2014" name="G3 (Bethesda)">
        <title>The reference genome sequence of Saccharomyces cerevisiae: Then and now.</title>
        <authorList>
            <person name="Engel S.R."/>
            <person name="Dietrich F.S."/>
            <person name="Fisk D.G."/>
            <person name="Binkley G."/>
            <person name="Balakrishnan R."/>
            <person name="Costanzo M.C."/>
            <person name="Dwight S.S."/>
            <person name="Hitz B.C."/>
            <person name="Karra K."/>
            <person name="Nash R.S."/>
            <person name="Weng S."/>
            <person name="Wong E.D."/>
            <person name="Lloyd P."/>
            <person name="Skrzypek M.S."/>
            <person name="Miyasato S.R."/>
            <person name="Simison M."/>
            <person name="Cherry J.M."/>
        </authorList>
    </citation>
    <scope>GENOME REANNOTATION</scope>
    <scope>SEQUENCE REVISION TO 559</scope>
    <source>
        <strain>ATCC 204508 / S288c</strain>
    </source>
</reference>
<reference key="4">
    <citation type="journal article" date="1995" name="J. Biol. Chem.">
        <title>Differential biochemical regulation of the URA7- and URA8-encoded CTP synthetases from Saccharomyces cerevisiae.</title>
        <authorList>
            <person name="Nadkarni A.K."/>
            <person name="McDonough V.M."/>
            <person name="Yang W.-L."/>
            <person name="Stukey J.E."/>
            <person name="Ozier-Kalogeropoulos O."/>
            <person name="Carman G.M."/>
        </authorList>
    </citation>
    <scope>BIOPHYSICOCHEMICAL PROPERTIES</scope>
    <scope>ACTIVITY REGULATION</scope>
    <scope>SUBUNIT</scope>
</reference>
<reference key="5">
    <citation type="journal article" date="1998" name="J. Biol. Chem.">
        <title>Effect of CTP synthetase regulation by CTP on phospholipid synthesis in Saccharomyces cerevisiae.</title>
        <authorList>
            <person name="Ostrander D.B."/>
            <person name="O'Brien D.J."/>
            <person name="Gorman J.A."/>
            <person name="Carman G.M."/>
        </authorList>
    </citation>
    <scope>ACTIVITY REGULATION</scope>
    <scope>MUTAGENESIS OF GLU-161 AND HIS-233</scope>
</reference>
<reference key="6">
    <citation type="journal article" date="2003" name="Nature">
        <title>Global analysis of protein localization in budding yeast.</title>
        <authorList>
            <person name="Huh W.-K."/>
            <person name="Falvo J.V."/>
            <person name="Gerke L.C."/>
            <person name="Carroll A.S."/>
            <person name="Howson R.W."/>
            <person name="Weissman J.S."/>
            <person name="O'Shea E.K."/>
        </authorList>
    </citation>
    <scope>SUBCELLULAR LOCATION [LARGE SCALE ANALYSIS]</scope>
</reference>
<reference key="7">
    <citation type="journal article" date="2003" name="Nature">
        <title>Global analysis of protein expression in yeast.</title>
        <authorList>
            <person name="Ghaemmaghami S."/>
            <person name="Huh W.-K."/>
            <person name="Bower K."/>
            <person name="Howson R.W."/>
            <person name="Belle A."/>
            <person name="Dephoure N."/>
            <person name="O'Shea E.K."/>
            <person name="Weissman J.S."/>
        </authorList>
    </citation>
    <scope>LEVEL OF PROTEIN EXPRESSION [LARGE SCALE ANALYSIS]</scope>
</reference>